<protein>
    <recommendedName>
        <fullName>Protein krasavietz</fullName>
    </recommendedName>
    <alternativeName>
        <fullName>Eukaryotic translation initiation factor 5C domain-containing protein</fullName>
        <shortName>Decp</shortName>
        <shortName>eIF5C domain-containing protein</shortName>
    </alternativeName>
    <alternativeName>
        <fullName>Protein extra bases</fullName>
    </alternativeName>
</protein>
<feature type="chain" id="PRO_0000254625" description="Protein krasavietz">
    <location>
        <begin position="1"/>
        <end position="422"/>
    </location>
</feature>
<feature type="domain" description="W2" evidence="1">
    <location>
        <begin position="244"/>
        <end position="415"/>
    </location>
</feature>
<feature type="region of interest" description="Disordered" evidence="2">
    <location>
        <begin position="1"/>
        <end position="26"/>
    </location>
</feature>
<feature type="modified residue" description="Phosphoserine" evidence="4">
    <location>
        <position position="407"/>
    </location>
</feature>
<feature type="modified residue" description="Phosphoserine" evidence="4">
    <location>
        <position position="412"/>
    </location>
</feature>
<feature type="modified residue" description="Phosphoserine" evidence="4">
    <location>
        <position position="414"/>
    </location>
</feature>
<dbReference type="EMBL" id="AF325529">
    <property type="protein sequence ID" value="AAK01218.1"/>
    <property type="molecule type" value="mRNA"/>
</dbReference>
<dbReference type="EMBL" id="AE014297">
    <property type="protein sequence ID" value="AAF51995.1"/>
    <property type="molecule type" value="Genomic_DNA"/>
</dbReference>
<dbReference type="EMBL" id="AE014297">
    <property type="protein sequence ID" value="AAF51996.1"/>
    <property type="molecule type" value="Genomic_DNA"/>
</dbReference>
<dbReference type="EMBL" id="AE014297">
    <property type="protein sequence ID" value="AAG22214.1"/>
    <property type="molecule type" value="Genomic_DNA"/>
</dbReference>
<dbReference type="EMBL" id="AE014297">
    <property type="protein sequence ID" value="AAN13246.1"/>
    <property type="molecule type" value="Genomic_DNA"/>
</dbReference>
<dbReference type="EMBL" id="AE014297">
    <property type="protein sequence ID" value="AAN13247.1"/>
    <property type="molecule type" value="Genomic_DNA"/>
</dbReference>
<dbReference type="EMBL" id="AE014297">
    <property type="protein sequence ID" value="AAN13248.1"/>
    <property type="molecule type" value="Genomic_DNA"/>
</dbReference>
<dbReference type="EMBL" id="AE014297">
    <property type="protein sequence ID" value="AAN13249.1"/>
    <property type="molecule type" value="Genomic_DNA"/>
</dbReference>
<dbReference type="EMBL" id="AY058505">
    <property type="protein sequence ID" value="AAL13734.1"/>
    <property type="molecule type" value="mRNA"/>
</dbReference>
<dbReference type="RefSeq" id="NP_524238.1">
    <property type="nucleotide sequence ID" value="NM_079514.3"/>
</dbReference>
<dbReference type="RefSeq" id="NP_730958.1">
    <property type="nucleotide sequence ID" value="NM_169074.2"/>
</dbReference>
<dbReference type="RefSeq" id="NP_730959.1">
    <property type="nucleotide sequence ID" value="NM_169075.2"/>
</dbReference>
<dbReference type="RefSeq" id="NP_730960.1">
    <property type="nucleotide sequence ID" value="NM_169076.2"/>
</dbReference>
<dbReference type="RefSeq" id="NP_730961.1">
    <property type="nucleotide sequence ID" value="NM_169077.2"/>
</dbReference>
<dbReference type="RefSeq" id="NP_730962.1">
    <property type="nucleotide sequence ID" value="NM_169078.2"/>
</dbReference>
<dbReference type="RefSeq" id="NP_730963.1">
    <property type="nucleotide sequence ID" value="NM_169079.2"/>
</dbReference>
<dbReference type="SMR" id="Q9VNE2"/>
<dbReference type="BioGRID" id="65886">
    <property type="interactions" value="16"/>
</dbReference>
<dbReference type="FunCoup" id="Q9VNE2">
    <property type="interactions" value="1536"/>
</dbReference>
<dbReference type="IntAct" id="Q9VNE2">
    <property type="interactions" value="5"/>
</dbReference>
<dbReference type="STRING" id="7227.FBpp0078393"/>
<dbReference type="iPTMnet" id="Q9VNE2"/>
<dbReference type="PaxDb" id="7227-FBpp0078393"/>
<dbReference type="DNASU" id="40680"/>
<dbReference type="EnsemblMetazoa" id="FBtr0078744">
    <property type="protein sequence ID" value="FBpp0078393"/>
    <property type="gene ID" value="FBgn0250753"/>
</dbReference>
<dbReference type="EnsemblMetazoa" id="FBtr0078745">
    <property type="protein sequence ID" value="FBpp0078394"/>
    <property type="gene ID" value="FBgn0250753"/>
</dbReference>
<dbReference type="EnsemblMetazoa" id="FBtr0078746">
    <property type="protein sequence ID" value="FBpp0078395"/>
    <property type="gene ID" value="FBgn0250753"/>
</dbReference>
<dbReference type="EnsemblMetazoa" id="FBtr0078747">
    <property type="protein sequence ID" value="FBpp0078396"/>
    <property type="gene ID" value="FBgn0250753"/>
</dbReference>
<dbReference type="EnsemblMetazoa" id="FBtr0078748">
    <property type="protein sequence ID" value="FBpp0078397"/>
    <property type="gene ID" value="FBgn0250753"/>
</dbReference>
<dbReference type="EnsemblMetazoa" id="FBtr0078749">
    <property type="protein sequence ID" value="FBpp0078398"/>
    <property type="gene ID" value="FBgn0250753"/>
</dbReference>
<dbReference type="EnsemblMetazoa" id="FBtr0078750">
    <property type="protein sequence ID" value="FBpp0078399"/>
    <property type="gene ID" value="FBgn0250753"/>
</dbReference>
<dbReference type="GeneID" id="40680"/>
<dbReference type="KEGG" id="dme:Dmel_CG2922"/>
<dbReference type="UCSC" id="CG2922-RB">
    <property type="organism name" value="d. melanogaster"/>
</dbReference>
<dbReference type="AGR" id="FB:FBgn0250753"/>
<dbReference type="CTD" id="40680"/>
<dbReference type="FlyBase" id="FBgn0250753">
    <property type="gene designation" value="kra"/>
</dbReference>
<dbReference type="VEuPathDB" id="VectorBase:FBgn0250753"/>
<dbReference type="eggNOG" id="KOG2297">
    <property type="taxonomic scope" value="Eukaryota"/>
</dbReference>
<dbReference type="GeneTree" id="ENSGT00390000012561"/>
<dbReference type="HOGENOM" id="CLU_032849_0_1_1"/>
<dbReference type="InParanoid" id="Q9VNE2"/>
<dbReference type="OMA" id="ELIQCIW"/>
<dbReference type="OrthoDB" id="1727522at2759"/>
<dbReference type="PhylomeDB" id="Q9VNE2"/>
<dbReference type="BioGRID-ORCS" id="40680">
    <property type="hits" value="2 hits in 3 CRISPR screens"/>
</dbReference>
<dbReference type="ChiTaRS" id="kra">
    <property type="organism name" value="fly"/>
</dbReference>
<dbReference type="GenomeRNAi" id="40680"/>
<dbReference type="PRO" id="PR:Q9VNE2"/>
<dbReference type="Proteomes" id="UP000000803">
    <property type="component" value="Chromosome 3R"/>
</dbReference>
<dbReference type="Bgee" id="FBgn0250753">
    <property type="expression patterns" value="Expressed in adult enteroendocrine precursor cell in adult midgut (Drosophila) and 273 other cell types or tissues"/>
</dbReference>
<dbReference type="GO" id="GO:0030424">
    <property type="term" value="C:axon"/>
    <property type="evidence" value="ECO:0000314"/>
    <property type="project" value="FlyBase"/>
</dbReference>
<dbReference type="GO" id="GO:0044295">
    <property type="term" value="C:axonal growth cone"/>
    <property type="evidence" value="ECO:0000314"/>
    <property type="project" value="FlyBase"/>
</dbReference>
<dbReference type="GO" id="GO:0005737">
    <property type="term" value="C:cytoplasm"/>
    <property type="evidence" value="ECO:0000314"/>
    <property type="project" value="FlyBase"/>
</dbReference>
<dbReference type="GO" id="GO:0030175">
    <property type="term" value="C:filopodium"/>
    <property type="evidence" value="ECO:0000314"/>
    <property type="project" value="FlyBase"/>
</dbReference>
<dbReference type="GO" id="GO:0043025">
    <property type="term" value="C:neuronal cell body"/>
    <property type="evidence" value="ECO:0000314"/>
    <property type="project" value="FlyBase"/>
</dbReference>
<dbReference type="GO" id="GO:0043024">
    <property type="term" value="F:ribosomal small subunit binding"/>
    <property type="evidence" value="ECO:0000314"/>
    <property type="project" value="FlyBase"/>
</dbReference>
<dbReference type="GO" id="GO:0043022">
    <property type="term" value="F:ribosome binding"/>
    <property type="evidence" value="ECO:0000314"/>
    <property type="project" value="FlyBase"/>
</dbReference>
<dbReference type="GO" id="GO:0031369">
    <property type="term" value="F:translation initiation factor binding"/>
    <property type="evidence" value="ECO:0000353"/>
    <property type="project" value="FlyBase"/>
</dbReference>
<dbReference type="GO" id="GO:0016199">
    <property type="term" value="P:axon midline choice point recognition"/>
    <property type="evidence" value="ECO:0000315"/>
    <property type="project" value="FlyBase"/>
</dbReference>
<dbReference type="GO" id="GO:0048149">
    <property type="term" value="P:behavioral response to ethanol"/>
    <property type="evidence" value="ECO:0000315"/>
    <property type="project" value="FlyBase"/>
</dbReference>
<dbReference type="GO" id="GO:0030707">
    <property type="term" value="P:follicle cell of egg chamber development"/>
    <property type="evidence" value="ECO:0000315"/>
    <property type="project" value="FlyBase"/>
</dbReference>
<dbReference type="GO" id="GO:0007616">
    <property type="term" value="P:long-term memory"/>
    <property type="evidence" value="ECO:0000315"/>
    <property type="project" value="UniProtKB"/>
</dbReference>
<dbReference type="GO" id="GO:0017148">
    <property type="term" value="P:negative regulation of translation"/>
    <property type="evidence" value="ECO:0000314"/>
    <property type="project" value="FlyBase"/>
</dbReference>
<dbReference type="GO" id="GO:0048477">
    <property type="term" value="P:oogenesis"/>
    <property type="evidence" value="ECO:0000315"/>
    <property type="project" value="FlyBase"/>
</dbReference>
<dbReference type="GO" id="GO:0051491">
    <property type="term" value="P:positive regulation of filopodium assembly"/>
    <property type="evidence" value="ECO:0000315"/>
    <property type="project" value="FlyBase"/>
</dbReference>
<dbReference type="CDD" id="cd11560">
    <property type="entry name" value="W2_eIF5C_like"/>
    <property type="match status" value="1"/>
</dbReference>
<dbReference type="FunFam" id="1.25.40.180:FF:000006">
    <property type="entry name" value="Basic leucine zipper and W2 domain-containing protein 1"/>
    <property type="match status" value="1"/>
</dbReference>
<dbReference type="Gene3D" id="1.25.40.180">
    <property type="match status" value="2"/>
</dbReference>
<dbReference type="InterPro" id="IPR016024">
    <property type="entry name" value="ARM-type_fold"/>
</dbReference>
<dbReference type="InterPro" id="IPR051245">
    <property type="entry name" value="eIF5-mimic_regulator"/>
</dbReference>
<dbReference type="InterPro" id="IPR043510">
    <property type="entry name" value="W2_BZW1/2"/>
</dbReference>
<dbReference type="InterPro" id="IPR003307">
    <property type="entry name" value="W2_domain"/>
</dbReference>
<dbReference type="PANTHER" id="PTHR14208">
    <property type="entry name" value="BASIC LEUCINE ZIPPER AND W2 DOMAIN-CONTAINING PROTEIN"/>
    <property type="match status" value="1"/>
</dbReference>
<dbReference type="PANTHER" id="PTHR14208:SF2">
    <property type="entry name" value="PROTEIN KRASAVIETZ"/>
    <property type="match status" value="1"/>
</dbReference>
<dbReference type="Pfam" id="PF25504">
    <property type="entry name" value="HEAT_5MP1_2"/>
    <property type="match status" value="1"/>
</dbReference>
<dbReference type="Pfam" id="PF02020">
    <property type="entry name" value="W2"/>
    <property type="match status" value="1"/>
</dbReference>
<dbReference type="SMART" id="SM00515">
    <property type="entry name" value="eIF5C"/>
    <property type="match status" value="1"/>
</dbReference>
<dbReference type="SUPFAM" id="SSF48371">
    <property type="entry name" value="ARM repeat"/>
    <property type="match status" value="1"/>
</dbReference>
<dbReference type="PROSITE" id="PS51363">
    <property type="entry name" value="W2"/>
    <property type="match status" value="1"/>
</dbReference>
<reference key="1">
    <citation type="submission" date="2000-11" db="EMBL/GenBank/DDBJ databases">
        <title>Drosophila eIF5C-containing protein gene (Decp).</title>
        <authorList>
            <person name="Wan Y."/>
            <person name="Zhu K."/>
            <person name="Boulianne G.L."/>
            <person name="Xie W."/>
        </authorList>
    </citation>
    <scope>NUCLEOTIDE SEQUENCE [MRNA]</scope>
</reference>
<reference key="2">
    <citation type="journal article" date="2000" name="Science">
        <title>The genome sequence of Drosophila melanogaster.</title>
        <authorList>
            <person name="Adams M.D."/>
            <person name="Celniker S.E."/>
            <person name="Holt R.A."/>
            <person name="Evans C.A."/>
            <person name="Gocayne J.D."/>
            <person name="Amanatides P.G."/>
            <person name="Scherer S.E."/>
            <person name="Li P.W."/>
            <person name="Hoskins R.A."/>
            <person name="Galle R.F."/>
            <person name="George R.A."/>
            <person name="Lewis S.E."/>
            <person name="Richards S."/>
            <person name="Ashburner M."/>
            <person name="Henderson S.N."/>
            <person name="Sutton G.G."/>
            <person name="Wortman J.R."/>
            <person name="Yandell M.D."/>
            <person name="Zhang Q."/>
            <person name="Chen L.X."/>
            <person name="Brandon R.C."/>
            <person name="Rogers Y.-H.C."/>
            <person name="Blazej R.G."/>
            <person name="Champe M."/>
            <person name="Pfeiffer B.D."/>
            <person name="Wan K.H."/>
            <person name="Doyle C."/>
            <person name="Baxter E.G."/>
            <person name="Helt G."/>
            <person name="Nelson C.R."/>
            <person name="Miklos G.L.G."/>
            <person name="Abril J.F."/>
            <person name="Agbayani A."/>
            <person name="An H.-J."/>
            <person name="Andrews-Pfannkoch C."/>
            <person name="Baldwin D."/>
            <person name="Ballew R.M."/>
            <person name="Basu A."/>
            <person name="Baxendale J."/>
            <person name="Bayraktaroglu L."/>
            <person name="Beasley E.M."/>
            <person name="Beeson K.Y."/>
            <person name="Benos P.V."/>
            <person name="Berman B.P."/>
            <person name="Bhandari D."/>
            <person name="Bolshakov S."/>
            <person name="Borkova D."/>
            <person name="Botchan M.R."/>
            <person name="Bouck J."/>
            <person name="Brokstein P."/>
            <person name="Brottier P."/>
            <person name="Burtis K.C."/>
            <person name="Busam D.A."/>
            <person name="Butler H."/>
            <person name="Cadieu E."/>
            <person name="Center A."/>
            <person name="Chandra I."/>
            <person name="Cherry J.M."/>
            <person name="Cawley S."/>
            <person name="Dahlke C."/>
            <person name="Davenport L.B."/>
            <person name="Davies P."/>
            <person name="de Pablos B."/>
            <person name="Delcher A."/>
            <person name="Deng Z."/>
            <person name="Mays A.D."/>
            <person name="Dew I."/>
            <person name="Dietz S.M."/>
            <person name="Dodson K."/>
            <person name="Doup L.E."/>
            <person name="Downes M."/>
            <person name="Dugan-Rocha S."/>
            <person name="Dunkov B.C."/>
            <person name="Dunn P."/>
            <person name="Durbin K.J."/>
            <person name="Evangelista C.C."/>
            <person name="Ferraz C."/>
            <person name="Ferriera S."/>
            <person name="Fleischmann W."/>
            <person name="Fosler C."/>
            <person name="Gabrielian A.E."/>
            <person name="Garg N.S."/>
            <person name="Gelbart W.M."/>
            <person name="Glasser K."/>
            <person name="Glodek A."/>
            <person name="Gong F."/>
            <person name="Gorrell J.H."/>
            <person name="Gu Z."/>
            <person name="Guan P."/>
            <person name="Harris M."/>
            <person name="Harris N.L."/>
            <person name="Harvey D.A."/>
            <person name="Heiman T.J."/>
            <person name="Hernandez J.R."/>
            <person name="Houck J."/>
            <person name="Hostin D."/>
            <person name="Houston K.A."/>
            <person name="Howland T.J."/>
            <person name="Wei M.-H."/>
            <person name="Ibegwam C."/>
            <person name="Jalali M."/>
            <person name="Kalush F."/>
            <person name="Karpen G.H."/>
            <person name="Ke Z."/>
            <person name="Kennison J.A."/>
            <person name="Ketchum K.A."/>
            <person name="Kimmel B.E."/>
            <person name="Kodira C.D."/>
            <person name="Kraft C.L."/>
            <person name="Kravitz S."/>
            <person name="Kulp D."/>
            <person name="Lai Z."/>
            <person name="Lasko P."/>
            <person name="Lei Y."/>
            <person name="Levitsky A.A."/>
            <person name="Li J.H."/>
            <person name="Li Z."/>
            <person name="Liang Y."/>
            <person name="Lin X."/>
            <person name="Liu X."/>
            <person name="Mattei B."/>
            <person name="McIntosh T.C."/>
            <person name="McLeod M.P."/>
            <person name="McPherson D."/>
            <person name="Merkulov G."/>
            <person name="Milshina N.V."/>
            <person name="Mobarry C."/>
            <person name="Morris J."/>
            <person name="Moshrefi A."/>
            <person name="Mount S.M."/>
            <person name="Moy M."/>
            <person name="Murphy B."/>
            <person name="Murphy L."/>
            <person name="Muzny D.M."/>
            <person name="Nelson D.L."/>
            <person name="Nelson D.R."/>
            <person name="Nelson K.A."/>
            <person name="Nixon K."/>
            <person name="Nusskern D.R."/>
            <person name="Pacleb J.M."/>
            <person name="Palazzolo M."/>
            <person name="Pittman G.S."/>
            <person name="Pan S."/>
            <person name="Pollard J."/>
            <person name="Puri V."/>
            <person name="Reese M.G."/>
            <person name="Reinert K."/>
            <person name="Remington K."/>
            <person name="Saunders R.D.C."/>
            <person name="Scheeler F."/>
            <person name="Shen H."/>
            <person name="Shue B.C."/>
            <person name="Siden-Kiamos I."/>
            <person name="Simpson M."/>
            <person name="Skupski M.P."/>
            <person name="Smith T.J."/>
            <person name="Spier E."/>
            <person name="Spradling A.C."/>
            <person name="Stapleton M."/>
            <person name="Strong R."/>
            <person name="Sun E."/>
            <person name="Svirskas R."/>
            <person name="Tector C."/>
            <person name="Turner R."/>
            <person name="Venter E."/>
            <person name="Wang A.H."/>
            <person name="Wang X."/>
            <person name="Wang Z.-Y."/>
            <person name="Wassarman D.A."/>
            <person name="Weinstock G.M."/>
            <person name="Weissenbach J."/>
            <person name="Williams S.M."/>
            <person name="Woodage T."/>
            <person name="Worley K.C."/>
            <person name="Wu D."/>
            <person name="Yang S."/>
            <person name="Yao Q.A."/>
            <person name="Ye J."/>
            <person name="Yeh R.-F."/>
            <person name="Zaveri J.S."/>
            <person name="Zhan M."/>
            <person name="Zhang G."/>
            <person name="Zhao Q."/>
            <person name="Zheng L."/>
            <person name="Zheng X.H."/>
            <person name="Zhong F.N."/>
            <person name="Zhong W."/>
            <person name="Zhou X."/>
            <person name="Zhu S.C."/>
            <person name="Zhu X."/>
            <person name="Smith H.O."/>
            <person name="Gibbs R.A."/>
            <person name="Myers E.W."/>
            <person name="Rubin G.M."/>
            <person name="Venter J.C."/>
        </authorList>
    </citation>
    <scope>NUCLEOTIDE SEQUENCE [LARGE SCALE GENOMIC DNA]</scope>
    <source>
        <strain>Berkeley</strain>
    </source>
</reference>
<reference key="3">
    <citation type="journal article" date="2002" name="Genome Biol.">
        <title>Annotation of the Drosophila melanogaster euchromatic genome: a systematic review.</title>
        <authorList>
            <person name="Misra S."/>
            <person name="Crosby M.A."/>
            <person name="Mungall C.J."/>
            <person name="Matthews B.B."/>
            <person name="Campbell K.S."/>
            <person name="Hradecky P."/>
            <person name="Huang Y."/>
            <person name="Kaminker J.S."/>
            <person name="Millburn G.H."/>
            <person name="Prochnik S.E."/>
            <person name="Smith C.D."/>
            <person name="Tupy J.L."/>
            <person name="Whitfield E.J."/>
            <person name="Bayraktaroglu L."/>
            <person name="Berman B.P."/>
            <person name="Bettencourt B.R."/>
            <person name="Celniker S.E."/>
            <person name="de Grey A.D.N.J."/>
            <person name="Drysdale R.A."/>
            <person name="Harris N.L."/>
            <person name="Richter J."/>
            <person name="Russo S."/>
            <person name="Schroeder A.J."/>
            <person name="Shu S.Q."/>
            <person name="Stapleton M."/>
            <person name="Yamada C."/>
            <person name="Ashburner M."/>
            <person name="Gelbart W.M."/>
            <person name="Rubin G.M."/>
            <person name="Lewis S.E."/>
        </authorList>
    </citation>
    <scope>GENOME REANNOTATION</scope>
    <source>
        <strain>Berkeley</strain>
    </source>
</reference>
<reference key="4">
    <citation type="journal article" date="2002" name="Genome Biol.">
        <title>A Drosophila full-length cDNA resource.</title>
        <authorList>
            <person name="Stapleton M."/>
            <person name="Carlson J.W."/>
            <person name="Brokstein P."/>
            <person name="Yu C."/>
            <person name="Champe M."/>
            <person name="George R.A."/>
            <person name="Guarin H."/>
            <person name="Kronmiller B."/>
            <person name="Pacleb J.M."/>
            <person name="Park S."/>
            <person name="Wan K.H."/>
            <person name="Rubin G.M."/>
            <person name="Celniker S.E."/>
        </authorList>
    </citation>
    <scope>NUCLEOTIDE SEQUENCE [LARGE SCALE MRNA]</scope>
    <source>
        <strain>Berkeley</strain>
        <tissue>Embryo</tissue>
    </source>
</reference>
<reference key="5">
    <citation type="journal article" date="2003" name="Curr. Biol.">
        <title>The staufen/pumilio pathway is involved in Drosophila long-term memory.</title>
        <authorList>
            <person name="Dubnau J."/>
            <person name="Chiang A.-S."/>
            <person name="Grady L."/>
            <person name="Barditch J."/>
            <person name="Gossweiler S."/>
            <person name="McNeil J."/>
            <person name="Smith P."/>
            <person name="Buldoc F."/>
            <person name="Scott R."/>
            <person name="Certa U."/>
            <person name="Broger C."/>
            <person name="Tully T."/>
        </authorList>
    </citation>
    <scope>FUNCTION</scope>
    <scope>TISSUE SPECIFICITY</scope>
    <scope>DISRUPTION PHENOTYPE</scope>
</reference>
<reference key="6">
    <citation type="journal article" date="2008" name="J. Proteome Res.">
        <title>Phosphoproteome analysis of Drosophila melanogaster embryos.</title>
        <authorList>
            <person name="Zhai B."/>
            <person name="Villen J."/>
            <person name="Beausoleil S.A."/>
            <person name="Mintseris J."/>
            <person name="Gygi S.P."/>
        </authorList>
    </citation>
    <scope>PHOSPHORYLATION [LARGE SCALE ANALYSIS] AT SER-407; SER-412 AND SER-414</scope>
    <scope>IDENTIFICATION BY MASS SPECTROMETRY</scope>
    <source>
        <tissue>Embryo</tissue>
    </source>
</reference>
<accession>Q9VNE2</accession>
<accession>A4V2F9</accession>
<organism>
    <name type="scientific">Drosophila melanogaster</name>
    <name type="common">Fruit fly</name>
    <dbReference type="NCBI Taxonomy" id="7227"/>
    <lineage>
        <taxon>Eukaryota</taxon>
        <taxon>Metazoa</taxon>
        <taxon>Ecdysozoa</taxon>
        <taxon>Arthropoda</taxon>
        <taxon>Hexapoda</taxon>
        <taxon>Insecta</taxon>
        <taxon>Pterygota</taxon>
        <taxon>Neoptera</taxon>
        <taxon>Endopterygota</taxon>
        <taxon>Diptera</taxon>
        <taxon>Brachycera</taxon>
        <taxon>Muscomorpha</taxon>
        <taxon>Ephydroidea</taxon>
        <taxon>Drosophilidae</taxon>
        <taxon>Drosophila</taxon>
        <taxon>Sophophora</taxon>
    </lineage>
</organism>
<gene>
    <name type="primary">kra</name>
    <name type="synonym">ecp</name>
    <name type="synonym">eIF-5C</name>
    <name type="synonym">exba</name>
    <name type="ORF">CG2922</name>
</gene>
<comment type="function">
    <text evidence="3">May be involved in memory formation.</text>
</comment>
<comment type="tissue specificity">
    <text evidence="3">Expressed in mushroom bodies.</text>
</comment>
<comment type="disruption phenotype">
    <text evidence="3">Mutant flies show defective one-day memory but normal learning.</text>
</comment>
<comment type="similarity">
    <text evidence="5">Belongs to the BZW family.</text>
</comment>
<name>PKRA_DROME</name>
<keyword id="KW-0597">Phosphoprotein</keyword>
<keyword id="KW-1185">Reference proteome</keyword>
<evidence type="ECO:0000255" key="1">
    <source>
        <dbReference type="PROSITE-ProRule" id="PRU00695"/>
    </source>
</evidence>
<evidence type="ECO:0000256" key="2">
    <source>
        <dbReference type="SAM" id="MobiDB-lite"/>
    </source>
</evidence>
<evidence type="ECO:0000269" key="3">
    <source>
    </source>
</evidence>
<evidence type="ECO:0000269" key="4">
    <source>
    </source>
</evidence>
<evidence type="ECO:0000305" key="5"/>
<proteinExistence type="evidence at protein level"/>
<sequence length="422" mass="49225">MSQKTERPVLSGQRIKTRKRDEREKYDPTGFRDAVIAGLEKTEGDLEQISKYLDSAGNKLDYRRYGEVLFDILIAGGLLVPGGSISQDGEKPRTSYCIFDAPESMESMRNHEQVFVKLIRRYKYLEKMFEEEMGKVLLFVKGFTPSERIKLARMTALWLVNGSVPPNVLLVLNNEHLIKDGIALEFLLELFQTFKQEKGIAYLIQALKKGGLESKLMDFFPPNKRTEEYFKQVFLDKELNEIVKLHKAQASQEAKRELQQALIDDINDEKPYNEITSDIKDFSQRTNIPDHEIIVIIWSTIMSLGEWNKKEELVTDQAVRHLKNYCPLLQAFASTDRSELALILKVQEFCYENMNFMKAFQKIILLFYKTEVLSEEIILRWYKEGHSNKGKMHFLEQMRKFVEWLQSAEEESESEDEQKNGE</sequence>